<proteinExistence type="inferred from homology"/>
<feature type="chain" id="PRO_0000426836" description="Putative fatty-acid--CoA ligase fadD11">
    <location>
        <begin position="1"/>
        <end position="571"/>
    </location>
</feature>
<feature type="transmembrane region" description="Helical" evidence="1">
    <location>
        <begin position="314"/>
        <end position="334"/>
    </location>
</feature>
<feature type="transmembrane region" description="Helical" evidence="1">
    <location>
        <begin position="431"/>
        <end position="451"/>
    </location>
</feature>
<feature type="region of interest" description="Disordered" evidence="2">
    <location>
        <begin position="1"/>
        <end position="35"/>
    </location>
</feature>
<feature type="region of interest" description="Disordered" evidence="2">
    <location>
        <begin position="67"/>
        <end position="91"/>
    </location>
</feature>
<feature type="compositionally biased region" description="Low complexity" evidence="2">
    <location>
        <begin position="1"/>
        <end position="19"/>
    </location>
</feature>
<feature type="compositionally biased region" description="Basic residues" evidence="2">
    <location>
        <begin position="78"/>
        <end position="91"/>
    </location>
</feature>
<sequence length="571" mass="62309">MARLRGAGAAGRCRPGRFGSSARRHGLADDGEPDRVLPARRRCSARRRHLVFGVQHPARRAADLRVRQRGDQGGHLRATVRRSRSRQRCAHRTHRLRRWRAPGTLSLTDLYAAASGDFFDFESTWRAVQPEDIVTLIYTSGTTGNPKGVEMTHANLLFEGYAIDEVLGIRFGDRVTSFLPSAHIADRMTGLYLQEMFGTQVTAVADARTIAAALPDVRPTVWGAVPRVWEKLKAGIEFTVARETDEMKRQALAWAMSVAGKRANALLAGESMSDQLVAEWAKADELVLSKLRERLGFGELRWALSGAAPIPKETLAFFAGIGIPIAEIWGMSELSCVATASHPRDGRLGTVGKLLPGLQGKIAEDGEYLVRGPLVMKGYRKEPAKTAEAIDSDGWLHTGDVFDIDSDGYLRVVDRKKELIINAAGKNMSPANIENTILAACPMVGVMMAIGDGRTYNTALLVFDADSLGPYAAQRGLDASPAALAADPEVIARIAAGVAEGNAKLSRVEQIKRFRILPTLWEPGGDEITLTMKLKRRRIAAKYSAEIEELYASELRPQVYEPAAVPSTQPA</sequence>
<accession>P9WQ52</accession>
<accession>L0T9R9</accession>
<accession>Q10776</accession>
<evidence type="ECO:0000255" key="1"/>
<evidence type="ECO:0000256" key="2">
    <source>
        <dbReference type="SAM" id="MobiDB-lite"/>
    </source>
</evidence>
<evidence type="ECO:0000305" key="3"/>
<gene>
    <name type="primary">fadD11</name>
    <name type="ordered locus">MT1600</name>
</gene>
<protein>
    <recommendedName>
        <fullName>Putative fatty-acid--CoA ligase fadD11</fullName>
        <ecNumber>6.2.1.-</ecNumber>
    </recommendedName>
    <alternativeName>
        <fullName>Acyl-CoA synthetase</fullName>
    </alternativeName>
</protein>
<name>FAD11_MYCTO</name>
<comment type="subcellular location">
    <subcellularLocation>
        <location evidence="3">Cell membrane</location>
        <topology evidence="3">Multi-pass membrane protein</topology>
    </subcellularLocation>
</comment>
<comment type="similarity">
    <text evidence="3">Belongs to the ATP-dependent AMP-binding enzyme family.</text>
</comment>
<keyword id="KW-1003">Cell membrane</keyword>
<keyword id="KW-0276">Fatty acid metabolism</keyword>
<keyword id="KW-0436">Ligase</keyword>
<keyword id="KW-0443">Lipid metabolism</keyword>
<keyword id="KW-0472">Membrane</keyword>
<keyword id="KW-1185">Reference proteome</keyword>
<keyword id="KW-0812">Transmembrane</keyword>
<keyword id="KW-1133">Transmembrane helix</keyword>
<dbReference type="EC" id="6.2.1.-"/>
<dbReference type="EMBL" id="AE000516">
    <property type="protein sequence ID" value="AAK45867.1"/>
    <property type="molecule type" value="Genomic_DNA"/>
</dbReference>
<dbReference type="PIR" id="C70762">
    <property type="entry name" value="C70762"/>
</dbReference>
<dbReference type="KEGG" id="mtc:MT1600"/>
<dbReference type="PATRIC" id="fig|83331.31.peg.1722"/>
<dbReference type="HOGENOM" id="CLU_000022_45_5_11"/>
<dbReference type="Proteomes" id="UP000001020">
    <property type="component" value="Chromosome"/>
</dbReference>
<dbReference type="GO" id="GO:0005886">
    <property type="term" value="C:plasma membrane"/>
    <property type="evidence" value="ECO:0007669"/>
    <property type="project" value="UniProtKB-SubCell"/>
</dbReference>
<dbReference type="GO" id="GO:0004467">
    <property type="term" value="F:long-chain fatty acid-CoA ligase activity"/>
    <property type="evidence" value="ECO:0007669"/>
    <property type="project" value="TreeGrafter"/>
</dbReference>
<dbReference type="CDD" id="cd05907">
    <property type="entry name" value="VL_LC_FACS_like"/>
    <property type="match status" value="1"/>
</dbReference>
<dbReference type="Gene3D" id="3.40.50.12780">
    <property type="entry name" value="N-terminal domain of ligase-like"/>
    <property type="match status" value="2"/>
</dbReference>
<dbReference type="InterPro" id="IPR020845">
    <property type="entry name" value="AMP-binding_CS"/>
</dbReference>
<dbReference type="InterPro" id="IPR000873">
    <property type="entry name" value="AMP-dep_synth/lig_dom"/>
</dbReference>
<dbReference type="InterPro" id="IPR042099">
    <property type="entry name" value="ANL_N_sf"/>
</dbReference>
<dbReference type="PANTHER" id="PTHR43272:SF32">
    <property type="entry name" value="AMP-DEPENDENT SYNTHETASE_LIGASE DOMAIN-CONTAINING PROTEIN"/>
    <property type="match status" value="1"/>
</dbReference>
<dbReference type="PANTHER" id="PTHR43272">
    <property type="entry name" value="LONG-CHAIN-FATTY-ACID--COA LIGASE"/>
    <property type="match status" value="1"/>
</dbReference>
<dbReference type="Pfam" id="PF00501">
    <property type="entry name" value="AMP-binding"/>
    <property type="match status" value="1"/>
</dbReference>
<dbReference type="Pfam" id="PF23562">
    <property type="entry name" value="AMP-binding_C_3"/>
    <property type="match status" value="1"/>
</dbReference>
<dbReference type="SUPFAM" id="SSF56801">
    <property type="entry name" value="Acetyl-CoA synthetase-like"/>
    <property type="match status" value="1"/>
</dbReference>
<dbReference type="PROSITE" id="PS00455">
    <property type="entry name" value="AMP_BINDING"/>
    <property type="match status" value="1"/>
</dbReference>
<organism>
    <name type="scientific">Mycobacterium tuberculosis (strain CDC 1551 / Oshkosh)</name>
    <dbReference type="NCBI Taxonomy" id="83331"/>
    <lineage>
        <taxon>Bacteria</taxon>
        <taxon>Bacillati</taxon>
        <taxon>Actinomycetota</taxon>
        <taxon>Actinomycetes</taxon>
        <taxon>Mycobacteriales</taxon>
        <taxon>Mycobacteriaceae</taxon>
        <taxon>Mycobacterium</taxon>
        <taxon>Mycobacterium tuberculosis complex</taxon>
    </lineage>
</organism>
<reference key="1">
    <citation type="journal article" date="2002" name="J. Bacteriol.">
        <title>Whole-genome comparison of Mycobacterium tuberculosis clinical and laboratory strains.</title>
        <authorList>
            <person name="Fleischmann R.D."/>
            <person name="Alland D."/>
            <person name="Eisen J.A."/>
            <person name="Carpenter L."/>
            <person name="White O."/>
            <person name="Peterson J.D."/>
            <person name="DeBoy R.T."/>
            <person name="Dodson R.J."/>
            <person name="Gwinn M.L."/>
            <person name="Haft D.H."/>
            <person name="Hickey E.K."/>
            <person name="Kolonay J.F."/>
            <person name="Nelson W.C."/>
            <person name="Umayam L.A."/>
            <person name="Ermolaeva M.D."/>
            <person name="Salzberg S.L."/>
            <person name="Delcher A."/>
            <person name="Utterback T.R."/>
            <person name="Weidman J.F."/>
            <person name="Khouri H.M."/>
            <person name="Gill J."/>
            <person name="Mikula A."/>
            <person name="Bishai W."/>
            <person name="Jacobs W.R. Jr."/>
            <person name="Venter J.C."/>
            <person name="Fraser C.M."/>
        </authorList>
    </citation>
    <scope>NUCLEOTIDE SEQUENCE [LARGE SCALE GENOMIC DNA]</scope>
    <source>
        <strain>CDC 1551 / Oshkosh</strain>
    </source>
</reference>